<evidence type="ECO:0000250" key="1"/>
<evidence type="ECO:0000255" key="2">
    <source>
        <dbReference type="PROSITE-ProRule" id="PRU01251"/>
    </source>
</evidence>
<evidence type="ECO:0000256" key="3">
    <source>
        <dbReference type="SAM" id="MobiDB-lite"/>
    </source>
</evidence>
<evidence type="ECO:0000269" key="4">
    <source>
    </source>
</evidence>
<evidence type="ECO:0000305" key="5"/>
<name>CLPB_STRAL</name>
<organism>
    <name type="scientific">Streptomyces albus G</name>
    <dbReference type="NCBI Taxonomy" id="1962"/>
    <lineage>
        <taxon>Bacteria</taxon>
        <taxon>Bacillati</taxon>
        <taxon>Actinomycetota</taxon>
        <taxon>Actinomycetes</taxon>
        <taxon>Kitasatosporales</taxon>
        <taxon>Streptomycetaceae</taxon>
        <taxon>Streptomyces</taxon>
    </lineage>
</organism>
<keyword id="KW-0024">Alternative initiation</keyword>
<keyword id="KW-0067">ATP-binding</keyword>
<keyword id="KW-0143">Chaperone</keyword>
<keyword id="KW-0175">Coiled coil</keyword>
<keyword id="KW-0963">Cytoplasm</keyword>
<keyword id="KW-0547">Nucleotide-binding</keyword>
<keyword id="KW-0677">Repeat</keyword>
<keyword id="KW-0346">Stress response</keyword>
<accession>Q9Z6E4</accession>
<comment type="function">
    <text evidence="1">Part of a stress-induced multi-chaperone system, it is involved in the recovery of the cell from heat-induced damage, in cooperation with DnaK, DnaJ and GrpE. Acts before DnaK, in the processing of protein aggregates. Protein binding stimulates the ATPase activity; ATP hydrolysis unfolds the denatured protein aggregates, which probably helps expose new hydrophobic binding sites on the surface of ClpB-bound aggregates, contributing to the solubilization and refolding of denatured protein aggregates by DnaK (By similarity).</text>
</comment>
<comment type="subunit">
    <text evidence="1">Homohexamer. The oligomerization is ATP-dependent (By similarity).</text>
</comment>
<comment type="subcellular location">
    <subcellularLocation>
        <location evidence="5">Cytoplasm</location>
    </subcellularLocation>
</comment>
<comment type="alternative products">
    <event type="alternative initiation"/>
    <isoform>
        <id>Q9Z6E4-1</id>
        <name>ClpB</name>
        <sequence type="displayed"/>
    </isoform>
    <isoform>
        <id>Q9Z6E4-2</id>
        <name>ClpB'</name>
        <sequence type="described" ref="VSP_018964 VSP_018988"/>
    </isoform>
</comment>
<comment type="induction">
    <text evidence="4">By heat shock.</text>
</comment>
<comment type="domain">
    <text evidence="1">The Clp repeat (R) domain probably functions as a substrate-discriminating domain, recruiting aggregated proteins to the ClpB hexamer and/or stabilizing bound proteins. The NBD2 domain is responsible for oligomerization, whereas the NBD1 domain stabilizes the hexamer probably in an ATP-dependent manner. The movement of the coiled-coil domain is essential for ClpB ability to rescue proteins from an aggregated state, probably by pulling apart large aggregated proteins, which are bound between the coiled-coils motifs of adjacent ClpB subunits in the functional hexamer (By similarity).</text>
</comment>
<comment type="similarity">
    <text evidence="5">Belongs to the ClpA/ClpB family.</text>
</comment>
<dbReference type="EMBL" id="AF076980">
    <property type="protein sequence ID" value="AAD15989.1"/>
    <property type="molecule type" value="Genomic_DNA"/>
</dbReference>
<dbReference type="SMR" id="Q9Z6E4"/>
<dbReference type="GO" id="GO:0005737">
    <property type="term" value="C:cytoplasm"/>
    <property type="evidence" value="ECO:0007669"/>
    <property type="project" value="UniProtKB-SubCell"/>
</dbReference>
<dbReference type="GO" id="GO:0005524">
    <property type="term" value="F:ATP binding"/>
    <property type="evidence" value="ECO:0007669"/>
    <property type="project" value="UniProtKB-KW"/>
</dbReference>
<dbReference type="GO" id="GO:0016887">
    <property type="term" value="F:ATP hydrolysis activity"/>
    <property type="evidence" value="ECO:0007669"/>
    <property type="project" value="InterPro"/>
</dbReference>
<dbReference type="GO" id="GO:0034605">
    <property type="term" value="P:cellular response to heat"/>
    <property type="evidence" value="ECO:0007669"/>
    <property type="project" value="TreeGrafter"/>
</dbReference>
<dbReference type="GO" id="GO:0042026">
    <property type="term" value="P:protein refolding"/>
    <property type="evidence" value="ECO:0007669"/>
    <property type="project" value="InterPro"/>
</dbReference>
<dbReference type="CDD" id="cd00009">
    <property type="entry name" value="AAA"/>
    <property type="match status" value="1"/>
</dbReference>
<dbReference type="CDD" id="cd19499">
    <property type="entry name" value="RecA-like_ClpB_Hsp104-like"/>
    <property type="match status" value="1"/>
</dbReference>
<dbReference type="FunFam" id="1.10.8.60:FF:000017">
    <property type="entry name" value="ATP-dependent chaperone ClpB"/>
    <property type="match status" value="1"/>
</dbReference>
<dbReference type="FunFam" id="3.40.50.300:FF:000120">
    <property type="entry name" value="ATP-dependent chaperone ClpB"/>
    <property type="match status" value="1"/>
</dbReference>
<dbReference type="FunFam" id="3.40.50.300:FF:000025">
    <property type="entry name" value="ATP-dependent Clp protease subunit"/>
    <property type="match status" value="1"/>
</dbReference>
<dbReference type="FunFam" id="3.40.50.300:FF:000010">
    <property type="entry name" value="Chaperone clpB 1, putative"/>
    <property type="match status" value="1"/>
</dbReference>
<dbReference type="Gene3D" id="1.10.8.60">
    <property type="match status" value="1"/>
</dbReference>
<dbReference type="Gene3D" id="1.10.1780.10">
    <property type="entry name" value="Clp, N-terminal domain"/>
    <property type="match status" value="1"/>
</dbReference>
<dbReference type="Gene3D" id="3.40.50.300">
    <property type="entry name" value="P-loop containing nucleotide triphosphate hydrolases"/>
    <property type="match status" value="3"/>
</dbReference>
<dbReference type="InterPro" id="IPR003593">
    <property type="entry name" value="AAA+_ATPase"/>
</dbReference>
<dbReference type="InterPro" id="IPR003959">
    <property type="entry name" value="ATPase_AAA_core"/>
</dbReference>
<dbReference type="InterPro" id="IPR017730">
    <property type="entry name" value="Chaperonin_ClpB"/>
</dbReference>
<dbReference type="InterPro" id="IPR019489">
    <property type="entry name" value="Clp_ATPase_C"/>
</dbReference>
<dbReference type="InterPro" id="IPR036628">
    <property type="entry name" value="Clp_N_dom_sf"/>
</dbReference>
<dbReference type="InterPro" id="IPR004176">
    <property type="entry name" value="Clp_R_dom"/>
</dbReference>
<dbReference type="InterPro" id="IPR001270">
    <property type="entry name" value="ClpA/B"/>
</dbReference>
<dbReference type="InterPro" id="IPR018368">
    <property type="entry name" value="ClpA/B_CS1"/>
</dbReference>
<dbReference type="InterPro" id="IPR028299">
    <property type="entry name" value="ClpA/B_CS2"/>
</dbReference>
<dbReference type="InterPro" id="IPR041546">
    <property type="entry name" value="ClpA/ClpB_AAA_lid"/>
</dbReference>
<dbReference type="InterPro" id="IPR050130">
    <property type="entry name" value="ClpA_ClpB"/>
</dbReference>
<dbReference type="InterPro" id="IPR027417">
    <property type="entry name" value="P-loop_NTPase"/>
</dbReference>
<dbReference type="NCBIfam" id="TIGR03346">
    <property type="entry name" value="chaperone_ClpB"/>
    <property type="match status" value="1"/>
</dbReference>
<dbReference type="PANTHER" id="PTHR11638">
    <property type="entry name" value="ATP-DEPENDENT CLP PROTEASE"/>
    <property type="match status" value="1"/>
</dbReference>
<dbReference type="PANTHER" id="PTHR11638:SF18">
    <property type="entry name" value="HEAT SHOCK PROTEIN 104"/>
    <property type="match status" value="1"/>
</dbReference>
<dbReference type="Pfam" id="PF00004">
    <property type="entry name" value="AAA"/>
    <property type="match status" value="1"/>
</dbReference>
<dbReference type="Pfam" id="PF07724">
    <property type="entry name" value="AAA_2"/>
    <property type="match status" value="1"/>
</dbReference>
<dbReference type="Pfam" id="PF17871">
    <property type="entry name" value="AAA_lid_9"/>
    <property type="match status" value="1"/>
</dbReference>
<dbReference type="Pfam" id="PF02861">
    <property type="entry name" value="Clp_N"/>
    <property type="match status" value="2"/>
</dbReference>
<dbReference type="Pfam" id="PF10431">
    <property type="entry name" value="ClpB_D2-small"/>
    <property type="match status" value="1"/>
</dbReference>
<dbReference type="PRINTS" id="PR00300">
    <property type="entry name" value="CLPPROTEASEA"/>
</dbReference>
<dbReference type="SMART" id="SM00382">
    <property type="entry name" value="AAA"/>
    <property type="match status" value="2"/>
</dbReference>
<dbReference type="SMART" id="SM01086">
    <property type="entry name" value="ClpB_D2-small"/>
    <property type="match status" value="1"/>
</dbReference>
<dbReference type="SUPFAM" id="SSF81923">
    <property type="entry name" value="Double Clp-N motif"/>
    <property type="match status" value="1"/>
</dbReference>
<dbReference type="SUPFAM" id="SSF52540">
    <property type="entry name" value="P-loop containing nucleoside triphosphate hydrolases"/>
    <property type="match status" value="2"/>
</dbReference>
<dbReference type="PROSITE" id="PS51903">
    <property type="entry name" value="CLP_R"/>
    <property type="match status" value="1"/>
</dbReference>
<dbReference type="PROSITE" id="PS00870">
    <property type="entry name" value="CLPAB_1"/>
    <property type="match status" value="1"/>
</dbReference>
<dbReference type="PROSITE" id="PS00871">
    <property type="entry name" value="CLPAB_2"/>
    <property type="match status" value="1"/>
</dbReference>
<protein>
    <recommendedName>
        <fullName>Chaperone protein ClpB</fullName>
    </recommendedName>
</protein>
<gene>
    <name type="primary">clpB</name>
</gene>
<proteinExistence type="evidence at transcript level"/>
<sequence>MDAELTNRSRDALNAATTRAVSAGNPDLTPAHLLLALLEGQDNENLVDLLAAVERRPGGGSARAPSASLGSLPGVTGSTVAPPQPNRDLLAVIADAGRRAKDLGDEFLSTEHLLIGIRPTARPPRCSPGRAPTPEKLLEAFQNTRGGRRVTTPRPEGQYKALEKFGTDFTAAARERKLDPVIGRDQEIRRVVQVLSRRTKNNPVLIGEPGVGKTAVVEGLAQRIVKGDVPESLKDKRLVSLDLGAMVAGAKYRGEFEERLKTVLSEIKESDGQIVTFIDELHTVVGAGAADSAMDAGNMLKPMLARGELRMVGATTLDEYRERIEKDPALERRFQQVLVAEPSVEDSIAILRGLKGRYEAHHKVQIADSALVAAATLSDRYITSRFLPDKAIDLVDEAASRLRMEIDSSPLEIDELQRSVDRLKMEELALDRETDPASRQRLEKLRRDLADRERSCAAHRPWEKEKQSLNRVGELKERLDELRGQAERAQQHGDFDTASKLLYGEIPTLERDLRWRPAEEEAAKDTMVKEEVGPDDIADVVGSWTGIPAGRLLEGETQKLLRMEAELGRRLIGQSEAVQAVSDAVRTRAGIADPDRPTGSFLFLGPTGVGKTELAKALADFLFDDERAMIRIDMSEYGEKHSVARLVGAPPGYVGYEEGGQLTEAVRRRPYSVVLLDEVEKAHPGVFDILLQVLDDGRLTDGQGRTVDFRNTILVLTSNLGSQYLVGSAPEEEKRRQVMEVVRSSFKPEFLNRLDDLVIFSALDEDELARIAGLQIAGLARRLADRRLSLDVTPEALAWLAKEGFDPAYGARPLRRLIQTAIGDRLAKEILAGEVRDGDTVRVDRVEDGLLVGRAEG</sequence>
<feature type="chain" id="PRO_0000005495" description="Chaperone protein ClpB">
    <location>
        <begin position="1"/>
        <end position="857"/>
    </location>
</feature>
<feature type="domain" description="Clp R" evidence="2">
    <location>
        <begin position="1"/>
        <end position="147"/>
    </location>
</feature>
<feature type="region of interest" description="Repeat 1" evidence="2">
    <location>
        <begin position="5"/>
        <end position="72"/>
    </location>
</feature>
<feature type="region of interest" description="Disordered" evidence="3">
    <location>
        <begin position="56"/>
        <end position="83"/>
    </location>
</feature>
<feature type="region of interest" description="Repeat 2" evidence="2">
    <location>
        <begin position="85"/>
        <end position="147"/>
    </location>
</feature>
<feature type="region of interest" description="NBD1" evidence="1">
    <location>
        <begin position="160"/>
        <end position="341"/>
    </location>
</feature>
<feature type="region of interest" description="Linker" evidence="1">
    <location>
        <begin position="342"/>
        <end position="546"/>
    </location>
</feature>
<feature type="region of interest" description="NBD2" evidence="1">
    <location>
        <begin position="556"/>
        <end position="762"/>
    </location>
</feature>
<feature type="region of interest" description="C-terminal" evidence="1">
    <location>
        <begin position="763"/>
        <end position="857"/>
    </location>
</feature>
<feature type="coiled-coil region" evidence="1">
    <location>
        <begin position="392"/>
        <end position="525"/>
    </location>
</feature>
<feature type="binding site" evidence="1">
    <location>
        <begin position="207"/>
        <end position="214"/>
    </location>
    <ligand>
        <name>ATP</name>
        <dbReference type="ChEBI" id="CHEBI:30616"/>
        <label>1</label>
    </ligand>
</feature>
<feature type="binding site" evidence="1">
    <location>
        <begin position="605"/>
        <end position="612"/>
    </location>
    <ligand>
        <name>ATP</name>
        <dbReference type="ChEBI" id="CHEBI:30616"/>
        <label>2</label>
    </ligand>
</feature>
<feature type="splice variant" id="VSP_018964" description="In isoform ClpB'." evidence="5">
    <location>
        <begin position="1"/>
        <end position="149"/>
    </location>
</feature>
<feature type="splice variant" id="VSP_018988" description="In isoform ClpB'." evidence="5">
    <original>V</original>
    <variation>M</variation>
    <location>
        <position position="150"/>
    </location>
</feature>
<reference key="1">
    <citation type="journal article" date="1999" name="Mol. Microbiol.">
        <title>The ClpB ATPase of Streptomyces albus G belongs to the HspR heat shock regulon.</title>
        <authorList>
            <person name="Grandvalet C."/>
            <person name="de Crecy-Lagard V."/>
            <person name="Mazodier P."/>
        </authorList>
    </citation>
    <scope>NUCLEOTIDE SEQUENCE [GENOMIC DNA]</scope>
    <scope>INDUCTION</scope>
</reference>